<evidence type="ECO:0000255" key="1">
    <source>
        <dbReference type="PROSITE-ProRule" id="PRU00303"/>
    </source>
</evidence>
<evidence type="ECO:0000305" key="2"/>
<dbReference type="EMBL" id="U00089">
    <property type="protein sequence ID" value="AAB95748.1"/>
    <property type="molecule type" value="Genomic_DNA"/>
</dbReference>
<dbReference type="PIR" id="S73426">
    <property type="entry name" value="S73426"/>
</dbReference>
<dbReference type="RefSeq" id="NP_109742.1">
    <property type="nucleotide sequence ID" value="NC_000912.1"/>
</dbReference>
<dbReference type="RefSeq" id="WP_010874411.1">
    <property type="nucleotide sequence ID" value="NZ_OU342337.1"/>
</dbReference>
<dbReference type="EnsemblBacteria" id="AAB95748">
    <property type="protein sequence ID" value="AAB95748"/>
    <property type="gene ID" value="MPN_054"/>
</dbReference>
<dbReference type="KEGG" id="mpn:MPN_054"/>
<dbReference type="PATRIC" id="fig|272634.6.peg.54"/>
<dbReference type="HOGENOM" id="CLU_159944_0_0_14"/>
<dbReference type="BioCyc" id="MPNE272634:G1GJ3-82-MONOMER"/>
<dbReference type="Proteomes" id="UP000000808">
    <property type="component" value="Chromosome"/>
</dbReference>
<dbReference type="GO" id="GO:0005886">
    <property type="term" value="C:plasma membrane"/>
    <property type="evidence" value="ECO:0007669"/>
    <property type="project" value="UniProtKB-SubCell"/>
</dbReference>
<dbReference type="InterPro" id="IPR001595">
    <property type="entry name" value="Lipoprotein_3"/>
</dbReference>
<dbReference type="Pfam" id="PF00938">
    <property type="entry name" value="Lipoprotein_3"/>
    <property type="match status" value="1"/>
</dbReference>
<dbReference type="PROSITE" id="PS51257">
    <property type="entry name" value="PROKAR_LIPOPROTEIN"/>
    <property type="match status" value="1"/>
</dbReference>
<accession>P75060</accession>
<organism>
    <name type="scientific">Mycoplasma pneumoniae (strain ATCC 29342 / M129 / Subtype 1)</name>
    <name type="common">Mycoplasmoides pneumoniae</name>
    <dbReference type="NCBI Taxonomy" id="272634"/>
    <lineage>
        <taxon>Bacteria</taxon>
        <taxon>Bacillati</taxon>
        <taxon>Mycoplasmatota</taxon>
        <taxon>Mycoplasmoidales</taxon>
        <taxon>Mycoplasmoidaceae</taxon>
        <taxon>Mycoplasmoides</taxon>
    </lineage>
</organism>
<reference key="1">
    <citation type="journal article" date="1996" name="Nucleic Acids Res.">
        <title>Complete sequence analysis of the genome of the bacterium Mycoplasma pneumoniae.</title>
        <authorList>
            <person name="Himmelreich R."/>
            <person name="Hilbert H."/>
            <person name="Plagens H."/>
            <person name="Pirkl E."/>
            <person name="Li B.-C."/>
            <person name="Herrmann R."/>
        </authorList>
    </citation>
    <scope>NUCLEOTIDE SEQUENCE [LARGE SCALE GENOMIC DNA]</scope>
    <source>
        <strain>ATCC 29342 / M129 / Subtype 1</strain>
    </source>
</reference>
<comment type="subcellular location">
    <subcellularLocation>
        <location evidence="1">Cell membrane</location>
        <topology evidence="1">Lipid-anchor</topology>
    </subcellularLocation>
</comment>
<comment type="similarity">
    <text evidence="2">Belongs to the MG439/MG440 family.</text>
</comment>
<keyword id="KW-1003">Cell membrane</keyword>
<keyword id="KW-0449">Lipoprotein</keyword>
<keyword id="KW-0472">Membrane</keyword>
<keyword id="KW-0564">Palmitate</keyword>
<keyword id="KW-1185">Reference proteome</keyword>
<keyword id="KW-0732">Signal</keyword>
<name>Y054_MYCPN</name>
<gene>
    <name type="ordered locus">MPN_054</name>
    <name type="ORF">D09_orf123</name>
    <name type="ORF">MP100</name>
</gene>
<feature type="signal peptide" evidence="1">
    <location>
        <begin position="1"/>
        <end position="19"/>
    </location>
</feature>
<feature type="chain" id="PRO_0000014055" description="Uncharacterized lipoprotein MPN_054">
    <location>
        <begin position="20"/>
        <end position="123"/>
    </location>
</feature>
<feature type="lipid moiety-binding region" description="N-palmitoyl cysteine" evidence="1">
    <location>
        <position position="20"/>
    </location>
</feature>
<feature type="lipid moiety-binding region" description="S-diacylglycerol cysteine" evidence="1">
    <location>
        <position position="20"/>
    </location>
</feature>
<proteinExistence type="inferred from homology"/>
<sequence>MKIKYFFIPLFSSAILFSACSSIQSDLRNLIKETTGKDFDVSKLIKTSEGRKNLINSLKKSYESKPDETASLLLIAWKQSAEMGEIGFDDIKEGGIYTRDNDPFKLEQKVEYFNMEYKILVMF</sequence>
<protein>
    <recommendedName>
        <fullName>Uncharacterized lipoprotein MPN_054</fullName>
    </recommendedName>
</protein>